<proteinExistence type="inferred from homology"/>
<evidence type="ECO:0000255" key="1">
    <source>
        <dbReference type="HAMAP-Rule" id="MF_01566"/>
    </source>
</evidence>
<evidence type="ECO:0000256" key="2">
    <source>
        <dbReference type="SAM" id="MobiDB-lite"/>
    </source>
</evidence>
<accession>A9N2Z8</accession>
<comment type="subcellular location">
    <subcellularLocation>
        <location evidence="1">Cell membrane</location>
        <topology evidence="1">Single-pass membrane protein</topology>
    </subcellularLocation>
</comment>
<comment type="similarity">
    <text evidence="1">Belongs to the UPF0370 family.</text>
</comment>
<reference key="1">
    <citation type="submission" date="2007-11" db="EMBL/GenBank/DDBJ databases">
        <authorList>
            <consortium name="The Salmonella enterica serovar Paratyphi B Genome Sequencing Project"/>
            <person name="McClelland M."/>
            <person name="Sanderson E.K."/>
            <person name="Porwollik S."/>
            <person name="Spieth J."/>
            <person name="Clifton W.S."/>
            <person name="Fulton R."/>
            <person name="Cordes M."/>
            <person name="Wollam A."/>
            <person name="Shah N."/>
            <person name="Pepin K."/>
            <person name="Bhonagiri V."/>
            <person name="Nash W."/>
            <person name="Johnson M."/>
            <person name="Thiruvilangam P."/>
            <person name="Wilson R."/>
        </authorList>
    </citation>
    <scope>NUCLEOTIDE SEQUENCE [LARGE SCALE GENOMIC DNA]</scope>
    <source>
        <strain>ATCC BAA-1250 / SPB7</strain>
    </source>
</reference>
<name>YPFN_SALPB</name>
<sequence>MDWLAKYWWILVLVFLVGVLLNVIKDLKRIDHKKFLANKPELPPHRDFNDKWDDEDGWPKKDQPKK</sequence>
<gene>
    <name evidence="1" type="primary">ypfN</name>
    <name type="ordered locus">SPAB_00465</name>
</gene>
<organism>
    <name type="scientific">Salmonella paratyphi B (strain ATCC BAA-1250 / SPB7)</name>
    <dbReference type="NCBI Taxonomy" id="1016998"/>
    <lineage>
        <taxon>Bacteria</taxon>
        <taxon>Pseudomonadati</taxon>
        <taxon>Pseudomonadota</taxon>
        <taxon>Gammaproteobacteria</taxon>
        <taxon>Enterobacterales</taxon>
        <taxon>Enterobacteriaceae</taxon>
        <taxon>Salmonella</taxon>
    </lineage>
</organism>
<dbReference type="EMBL" id="CP000886">
    <property type="protein sequence ID" value="ABX65898.1"/>
    <property type="molecule type" value="Genomic_DNA"/>
</dbReference>
<dbReference type="RefSeq" id="WP_000383841.1">
    <property type="nucleotide sequence ID" value="NC_010102.1"/>
</dbReference>
<dbReference type="SMR" id="A9N2Z8"/>
<dbReference type="KEGG" id="spq:SPAB_00465"/>
<dbReference type="PATRIC" id="fig|1016998.12.peg.439"/>
<dbReference type="HOGENOM" id="CLU_198936_0_0_6"/>
<dbReference type="BioCyc" id="SENT1016998:SPAB_RS01895-MONOMER"/>
<dbReference type="Proteomes" id="UP000008556">
    <property type="component" value="Chromosome"/>
</dbReference>
<dbReference type="GO" id="GO:0005886">
    <property type="term" value="C:plasma membrane"/>
    <property type="evidence" value="ECO:0007669"/>
    <property type="project" value="UniProtKB-SubCell"/>
</dbReference>
<dbReference type="HAMAP" id="MF_01566">
    <property type="entry name" value="UPF0370"/>
    <property type="match status" value="1"/>
</dbReference>
<dbReference type="InterPro" id="IPR020910">
    <property type="entry name" value="UPF0370"/>
</dbReference>
<dbReference type="NCBIfam" id="NF010185">
    <property type="entry name" value="PRK13664.1"/>
    <property type="match status" value="1"/>
</dbReference>
<dbReference type="Pfam" id="PF13980">
    <property type="entry name" value="UPF0370"/>
    <property type="match status" value="1"/>
</dbReference>
<feature type="chain" id="PRO_1000087826" description="UPF0370 protein YpfN">
    <location>
        <begin position="1"/>
        <end position="66"/>
    </location>
</feature>
<feature type="transmembrane region" description="Helical" evidence="1">
    <location>
        <begin position="4"/>
        <end position="24"/>
    </location>
</feature>
<feature type="region of interest" description="Disordered" evidence="2">
    <location>
        <begin position="39"/>
        <end position="66"/>
    </location>
</feature>
<feature type="compositionally biased region" description="Basic and acidic residues" evidence="2">
    <location>
        <begin position="42"/>
        <end position="66"/>
    </location>
</feature>
<keyword id="KW-1003">Cell membrane</keyword>
<keyword id="KW-0472">Membrane</keyword>
<keyword id="KW-0812">Transmembrane</keyword>
<keyword id="KW-1133">Transmembrane helix</keyword>
<protein>
    <recommendedName>
        <fullName evidence="1">UPF0370 protein YpfN</fullName>
    </recommendedName>
</protein>